<name>TGT_GRABC</name>
<proteinExistence type="inferred from homology"/>
<gene>
    <name evidence="1" type="primary">tgt</name>
    <name type="ordered locus">GbCGDNIH1_0290</name>
</gene>
<protein>
    <recommendedName>
        <fullName evidence="1">Queuine tRNA-ribosyltransferase</fullName>
        <ecNumber evidence="1">2.4.2.29</ecNumber>
    </recommendedName>
    <alternativeName>
        <fullName evidence="1">Guanine insertion enzyme</fullName>
    </alternativeName>
    <alternativeName>
        <fullName evidence="1">tRNA-guanine transglycosylase</fullName>
    </alternativeName>
</protein>
<accession>Q0BVG4</accession>
<reference key="1">
    <citation type="journal article" date="2007" name="J. Bacteriol.">
        <title>Genome sequence analysis of the emerging human pathogenic acetic acid bacterium Granulibacter bethesdensis.</title>
        <authorList>
            <person name="Greenberg D.E."/>
            <person name="Porcella S.F."/>
            <person name="Zelazny A.M."/>
            <person name="Virtaneva K."/>
            <person name="Sturdevant D.E."/>
            <person name="Kupko J.J. III"/>
            <person name="Barbian K.D."/>
            <person name="Babar A."/>
            <person name="Dorward D.W."/>
            <person name="Holland S.M."/>
        </authorList>
    </citation>
    <scope>NUCLEOTIDE SEQUENCE [LARGE SCALE GENOMIC DNA]</scope>
    <source>
        <strain>ATCC BAA-1260 / CGDNIH1</strain>
    </source>
</reference>
<organism>
    <name type="scientific">Granulibacter bethesdensis (strain ATCC BAA-1260 / CGDNIH1)</name>
    <dbReference type="NCBI Taxonomy" id="391165"/>
    <lineage>
        <taxon>Bacteria</taxon>
        <taxon>Pseudomonadati</taxon>
        <taxon>Pseudomonadota</taxon>
        <taxon>Alphaproteobacteria</taxon>
        <taxon>Acetobacterales</taxon>
        <taxon>Acetobacteraceae</taxon>
        <taxon>Granulibacter</taxon>
    </lineage>
</organism>
<comment type="function">
    <text evidence="1">Catalyzes the base-exchange of a guanine (G) residue with the queuine precursor 7-aminomethyl-7-deazaguanine (PreQ1) at position 34 (anticodon wobble position) in tRNAs with GU(N) anticodons (tRNA-Asp, -Asn, -His and -Tyr). Catalysis occurs through a double-displacement mechanism. The nucleophile active site attacks the C1' of nucleotide 34 to detach the guanine base from the RNA, forming a covalent enzyme-RNA intermediate. The proton acceptor active site deprotonates the incoming PreQ1, allowing a nucleophilic attack on the C1' of the ribose to form the product. After dissociation, two additional enzymatic reactions on the tRNA convert PreQ1 to queuine (Q), resulting in the hypermodified nucleoside queuosine (7-(((4,5-cis-dihydroxy-2-cyclopenten-1-yl)amino)methyl)-7-deazaguanosine).</text>
</comment>
<comment type="catalytic activity">
    <reaction evidence="1">
        <text>7-aminomethyl-7-carbaguanine + guanosine(34) in tRNA = 7-aminomethyl-7-carbaguanosine(34) in tRNA + guanine</text>
        <dbReference type="Rhea" id="RHEA:24104"/>
        <dbReference type="Rhea" id="RHEA-COMP:10341"/>
        <dbReference type="Rhea" id="RHEA-COMP:10342"/>
        <dbReference type="ChEBI" id="CHEBI:16235"/>
        <dbReference type="ChEBI" id="CHEBI:58703"/>
        <dbReference type="ChEBI" id="CHEBI:74269"/>
        <dbReference type="ChEBI" id="CHEBI:82833"/>
        <dbReference type="EC" id="2.4.2.29"/>
    </reaction>
</comment>
<comment type="cofactor">
    <cofactor evidence="1">
        <name>Zn(2+)</name>
        <dbReference type="ChEBI" id="CHEBI:29105"/>
    </cofactor>
    <text evidence="1">Binds 1 zinc ion per subunit.</text>
</comment>
<comment type="pathway">
    <text evidence="1">tRNA modification; tRNA-queuosine biosynthesis.</text>
</comment>
<comment type="subunit">
    <text evidence="1">Homodimer. Within each dimer, one monomer is responsible for RNA recognition and catalysis, while the other monomer binds to the replacement base PreQ1.</text>
</comment>
<comment type="similarity">
    <text evidence="1">Belongs to the queuine tRNA-ribosyltransferase family.</text>
</comment>
<keyword id="KW-0328">Glycosyltransferase</keyword>
<keyword id="KW-0479">Metal-binding</keyword>
<keyword id="KW-0671">Queuosine biosynthesis</keyword>
<keyword id="KW-1185">Reference proteome</keyword>
<keyword id="KW-0808">Transferase</keyword>
<keyword id="KW-0819">tRNA processing</keyword>
<keyword id="KW-0862">Zinc</keyword>
<sequence length="377" mass="41075">MLMSLTLSLQAEDGRARAATLHTAHGDVPTPTFMPVGTAATVKAMMMDSVRATGAGIVLGNTYHLMLRPGADRVAALGGLHRFMDWPGPILTDSGGFQVMSLSSLRKLDKDGVTFQSHIDGSRHRLTPESSIGIQHKLDATITMAFDECTKFPATHEEAASSMELSMRWAARCRDAFVPRDGYGLFGIVQGSVYNDLRTQSVTALGDDFHGYAVGGLAVGEGQEAMFATLDHTLPLLPRGKPRYLMGVGTPDDILGAVMRGVDMFDCVMPTRAGRTARAYTSQGVMNMRNARYADDGRPIDPACDCPACTRHSRAYLHHLFRAGEMLGPMLLTWHNLNYYQSLMRGLRSAIMEGRLEQHAVTLRAAWAAGDREKQDG</sequence>
<dbReference type="EC" id="2.4.2.29" evidence="1"/>
<dbReference type="EMBL" id="CP000394">
    <property type="protein sequence ID" value="ABI61188.1"/>
    <property type="molecule type" value="Genomic_DNA"/>
</dbReference>
<dbReference type="SMR" id="Q0BVG4"/>
<dbReference type="STRING" id="391165.GbCGDNIH1_0290"/>
<dbReference type="KEGG" id="gbe:GbCGDNIH1_0290"/>
<dbReference type="eggNOG" id="COG0343">
    <property type="taxonomic scope" value="Bacteria"/>
</dbReference>
<dbReference type="HOGENOM" id="CLU_022060_0_1_5"/>
<dbReference type="UniPathway" id="UPA00392"/>
<dbReference type="Proteomes" id="UP000001963">
    <property type="component" value="Chromosome"/>
</dbReference>
<dbReference type="GO" id="GO:0005829">
    <property type="term" value="C:cytosol"/>
    <property type="evidence" value="ECO:0007669"/>
    <property type="project" value="TreeGrafter"/>
</dbReference>
<dbReference type="GO" id="GO:0046872">
    <property type="term" value="F:metal ion binding"/>
    <property type="evidence" value="ECO:0007669"/>
    <property type="project" value="UniProtKB-KW"/>
</dbReference>
<dbReference type="GO" id="GO:0008479">
    <property type="term" value="F:tRNA-guanosine(34) queuine transglycosylase activity"/>
    <property type="evidence" value="ECO:0007669"/>
    <property type="project" value="UniProtKB-UniRule"/>
</dbReference>
<dbReference type="GO" id="GO:0008616">
    <property type="term" value="P:queuosine biosynthetic process"/>
    <property type="evidence" value="ECO:0007669"/>
    <property type="project" value="UniProtKB-UniRule"/>
</dbReference>
<dbReference type="GO" id="GO:0002099">
    <property type="term" value="P:tRNA wobble guanine modification"/>
    <property type="evidence" value="ECO:0007669"/>
    <property type="project" value="TreeGrafter"/>
</dbReference>
<dbReference type="GO" id="GO:0101030">
    <property type="term" value="P:tRNA-guanine transglycosylation"/>
    <property type="evidence" value="ECO:0007669"/>
    <property type="project" value="InterPro"/>
</dbReference>
<dbReference type="FunFam" id="3.20.20.105:FF:000001">
    <property type="entry name" value="Queuine tRNA-ribosyltransferase"/>
    <property type="match status" value="1"/>
</dbReference>
<dbReference type="Gene3D" id="3.20.20.105">
    <property type="entry name" value="Queuine tRNA-ribosyltransferase-like"/>
    <property type="match status" value="1"/>
</dbReference>
<dbReference type="HAMAP" id="MF_00168">
    <property type="entry name" value="Q_tRNA_Tgt"/>
    <property type="match status" value="1"/>
</dbReference>
<dbReference type="InterPro" id="IPR050076">
    <property type="entry name" value="ArchSynthase1/Queuine_TRR"/>
</dbReference>
<dbReference type="InterPro" id="IPR004803">
    <property type="entry name" value="TGT"/>
</dbReference>
<dbReference type="InterPro" id="IPR036511">
    <property type="entry name" value="TGT-like_sf"/>
</dbReference>
<dbReference type="InterPro" id="IPR002616">
    <property type="entry name" value="tRNA_ribo_trans-like"/>
</dbReference>
<dbReference type="NCBIfam" id="TIGR00430">
    <property type="entry name" value="Q_tRNA_tgt"/>
    <property type="match status" value="1"/>
</dbReference>
<dbReference type="NCBIfam" id="TIGR00449">
    <property type="entry name" value="tgt_general"/>
    <property type="match status" value="1"/>
</dbReference>
<dbReference type="PANTHER" id="PTHR46499">
    <property type="entry name" value="QUEUINE TRNA-RIBOSYLTRANSFERASE"/>
    <property type="match status" value="1"/>
</dbReference>
<dbReference type="PANTHER" id="PTHR46499:SF1">
    <property type="entry name" value="QUEUINE TRNA-RIBOSYLTRANSFERASE"/>
    <property type="match status" value="1"/>
</dbReference>
<dbReference type="Pfam" id="PF01702">
    <property type="entry name" value="TGT"/>
    <property type="match status" value="1"/>
</dbReference>
<dbReference type="SUPFAM" id="SSF51713">
    <property type="entry name" value="tRNA-guanine transglycosylase"/>
    <property type="match status" value="1"/>
</dbReference>
<feature type="chain" id="PRO_1000016797" description="Queuine tRNA-ribosyltransferase">
    <location>
        <begin position="1"/>
        <end position="377"/>
    </location>
</feature>
<feature type="region of interest" description="RNA binding" evidence="1">
    <location>
        <begin position="247"/>
        <end position="253"/>
    </location>
</feature>
<feature type="region of interest" description="RNA binding; important for wobble base 34 recognition" evidence="1">
    <location>
        <begin position="271"/>
        <end position="275"/>
    </location>
</feature>
<feature type="active site" description="Proton acceptor" evidence="1">
    <location>
        <position position="93"/>
    </location>
</feature>
<feature type="active site" description="Nucleophile" evidence="1">
    <location>
        <position position="266"/>
    </location>
</feature>
<feature type="binding site" evidence="1">
    <location>
        <begin position="93"/>
        <end position="97"/>
    </location>
    <ligand>
        <name>substrate</name>
    </ligand>
</feature>
<feature type="binding site" evidence="1">
    <location>
        <position position="147"/>
    </location>
    <ligand>
        <name>substrate</name>
    </ligand>
</feature>
<feature type="binding site" evidence="1">
    <location>
        <position position="190"/>
    </location>
    <ligand>
        <name>substrate</name>
    </ligand>
</feature>
<feature type="binding site" evidence="1">
    <location>
        <position position="216"/>
    </location>
    <ligand>
        <name>substrate</name>
    </ligand>
</feature>
<feature type="binding site" evidence="1">
    <location>
        <position position="304"/>
    </location>
    <ligand>
        <name>Zn(2+)</name>
        <dbReference type="ChEBI" id="CHEBI:29105"/>
    </ligand>
</feature>
<feature type="binding site" evidence="1">
    <location>
        <position position="306"/>
    </location>
    <ligand>
        <name>Zn(2+)</name>
        <dbReference type="ChEBI" id="CHEBI:29105"/>
    </ligand>
</feature>
<feature type="binding site" evidence="1">
    <location>
        <position position="309"/>
    </location>
    <ligand>
        <name>Zn(2+)</name>
        <dbReference type="ChEBI" id="CHEBI:29105"/>
    </ligand>
</feature>
<feature type="binding site" evidence="1">
    <location>
        <position position="335"/>
    </location>
    <ligand>
        <name>Zn(2+)</name>
        <dbReference type="ChEBI" id="CHEBI:29105"/>
    </ligand>
</feature>
<evidence type="ECO:0000255" key="1">
    <source>
        <dbReference type="HAMAP-Rule" id="MF_00168"/>
    </source>
</evidence>